<organism>
    <name type="scientific">Carassius auratus</name>
    <name type="common">Goldfish</name>
    <dbReference type="NCBI Taxonomy" id="7957"/>
    <lineage>
        <taxon>Eukaryota</taxon>
        <taxon>Metazoa</taxon>
        <taxon>Chordata</taxon>
        <taxon>Craniata</taxon>
        <taxon>Vertebrata</taxon>
        <taxon>Euteleostomi</taxon>
        <taxon>Actinopterygii</taxon>
        <taxon>Neopterygii</taxon>
        <taxon>Teleostei</taxon>
        <taxon>Ostariophysi</taxon>
        <taxon>Cypriniformes</taxon>
        <taxon>Cyprinidae</taxon>
        <taxon>Cyprininae</taxon>
        <taxon>Carassius</taxon>
    </lineage>
</organism>
<name>ACTS_CARAU</name>
<comment type="function">
    <text>Actins are highly conserved proteins that are involved in various types of cell motility and are ubiquitously expressed in all eukaryotic cells.</text>
</comment>
<comment type="catalytic activity">
    <reaction evidence="5">
        <text>ATP + H2O = ADP + phosphate + H(+)</text>
        <dbReference type="Rhea" id="RHEA:13065"/>
        <dbReference type="ChEBI" id="CHEBI:15377"/>
        <dbReference type="ChEBI" id="CHEBI:15378"/>
        <dbReference type="ChEBI" id="CHEBI:30616"/>
        <dbReference type="ChEBI" id="CHEBI:43474"/>
        <dbReference type="ChEBI" id="CHEBI:456216"/>
    </reaction>
</comment>
<comment type="subunit">
    <text>Polymerization of globular actin (G-actin) leads to a structural filament (F-actin) in the form of a two-stranded helix. Each actin can bind to 4 others.</text>
</comment>
<comment type="subcellular location">
    <subcellularLocation>
        <location>Cytoplasm</location>
        <location>Cytoskeleton</location>
    </subcellularLocation>
</comment>
<comment type="PTM">
    <molecule>Actin, alpha skeletal muscle, intermediate form</molecule>
    <text evidence="3">N-terminal cleavage of acetylated cysteine of intermediate muscle actin by ACTMAP.</text>
</comment>
<comment type="PTM">
    <text evidence="3">Oxidation of Met-46 and Met-49 by MICALs (MICAL1, MICAL2 or MICAL3) to form methionine sulfoxide promotes actin filament depolymerization. MICAL1 and MICAL2 produce the (R)-S-oxide form. The (R)-S-oxide form is reverted by MSRB1 and MSRB2, which promotes actin repolymerization.</text>
</comment>
<comment type="PTM">
    <text evidence="2">Monomethylation at Lys-86 (K84me1) regulates actin-myosin interaction and actomyosin-dependent processes. Demethylation by ALKBH4 is required for maintaining actomyosin dynamics supporting normal cleavage furrow ingression during cytokinesis and cell migration.</text>
</comment>
<comment type="PTM">
    <text evidence="2">Methylated at His-75 by SETD3.</text>
</comment>
<comment type="miscellaneous">
    <text>In vertebrates 3 main groups of actin isoforms, alpha, beta and gamma have been identified. The alpha actins are found in muscle tissues and are a major constituent of the contractile apparatus. The beta and gamma actins coexist in most cell types as components of the cytoskeleton and as mediators of internal cell motility.</text>
</comment>
<comment type="similarity">
    <text evidence="6">Belongs to the actin family.</text>
</comment>
<proteinExistence type="evidence at transcript level"/>
<keyword id="KW-0007">Acetylation</keyword>
<keyword id="KW-0067">ATP-binding</keyword>
<keyword id="KW-0963">Cytoplasm</keyword>
<keyword id="KW-0206">Cytoskeleton</keyword>
<keyword id="KW-0378">Hydrolase</keyword>
<keyword id="KW-0488">Methylation</keyword>
<keyword id="KW-0514">Muscle protein</keyword>
<keyword id="KW-0547">Nucleotide-binding</keyword>
<keyword id="KW-0558">Oxidation</keyword>
<keyword id="KW-1185">Reference proteome</keyword>
<dbReference type="EC" id="3.6.4.-" evidence="5"/>
<dbReference type="EMBL" id="D50029">
    <property type="protein sequence ID" value="BAA08756.1"/>
    <property type="molecule type" value="mRNA"/>
</dbReference>
<dbReference type="SMR" id="P49055"/>
<dbReference type="OrthoDB" id="6953074at2759"/>
<dbReference type="Proteomes" id="UP000515129">
    <property type="component" value="Unplaced"/>
</dbReference>
<dbReference type="GO" id="GO:0005737">
    <property type="term" value="C:cytoplasm"/>
    <property type="evidence" value="ECO:0007669"/>
    <property type="project" value="UniProtKB-KW"/>
</dbReference>
<dbReference type="GO" id="GO:0005856">
    <property type="term" value="C:cytoskeleton"/>
    <property type="evidence" value="ECO:0007669"/>
    <property type="project" value="UniProtKB-SubCell"/>
</dbReference>
<dbReference type="GO" id="GO:0005524">
    <property type="term" value="F:ATP binding"/>
    <property type="evidence" value="ECO:0007669"/>
    <property type="project" value="UniProtKB-KW"/>
</dbReference>
<dbReference type="GO" id="GO:0016787">
    <property type="term" value="F:hydrolase activity"/>
    <property type="evidence" value="ECO:0007669"/>
    <property type="project" value="UniProtKB-KW"/>
</dbReference>
<dbReference type="CDD" id="cd10224">
    <property type="entry name" value="ASKHA_NBD_actin"/>
    <property type="match status" value="1"/>
</dbReference>
<dbReference type="FunFam" id="2.30.36.70:FF:000001">
    <property type="entry name" value="Actin, alpha skeletal muscle"/>
    <property type="match status" value="1"/>
</dbReference>
<dbReference type="FunFam" id="3.30.420.40:FF:000131">
    <property type="entry name" value="Actin, alpha skeletal muscle"/>
    <property type="match status" value="1"/>
</dbReference>
<dbReference type="FunFam" id="3.30.420.40:FF:000291">
    <property type="entry name" value="Actin, alpha skeletal muscle"/>
    <property type="match status" value="1"/>
</dbReference>
<dbReference type="FunFam" id="3.90.640.10:FF:000047">
    <property type="entry name" value="Actin, alpha skeletal muscle"/>
    <property type="match status" value="1"/>
</dbReference>
<dbReference type="FunFam" id="3.30.420.40:FF:000058">
    <property type="entry name" value="Putative actin-related protein 5"/>
    <property type="match status" value="1"/>
</dbReference>
<dbReference type="Gene3D" id="3.30.420.40">
    <property type="match status" value="2"/>
</dbReference>
<dbReference type="Gene3D" id="3.90.640.10">
    <property type="entry name" value="Actin, Chain A, domain 4"/>
    <property type="match status" value="1"/>
</dbReference>
<dbReference type="InterPro" id="IPR004000">
    <property type="entry name" value="Actin"/>
</dbReference>
<dbReference type="InterPro" id="IPR020902">
    <property type="entry name" value="Actin/actin-like_CS"/>
</dbReference>
<dbReference type="InterPro" id="IPR004001">
    <property type="entry name" value="Actin_CS"/>
</dbReference>
<dbReference type="InterPro" id="IPR043129">
    <property type="entry name" value="ATPase_NBD"/>
</dbReference>
<dbReference type="PANTHER" id="PTHR11937">
    <property type="entry name" value="ACTIN"/>
    <property type="match status" value="1"/>
</dbReference>
<dbReference type="Pfam" id="PF00022">
    <property type="entry name" value="Actin"/>
    <property type="match status" value="1"/>
</dbReference>
<dbReference type="PRINTS" id="PR00190">
    <property type="entry name" value="ACTIN"/>
</dbReference>
<dbReference type="SMART" id="SM00268">
    <property type="entry name" value="ACTIN"/>
    <property type="match status" value="1"/>
</dbReference>
<dbReference type="SUPFAM" id="SSF53067">
    <property type="entry name" value="Actin-like ATPase domain"/>
    <property type="match status" value="2"/>
</dbReference>
<dbReference type="PROSITE" id="PS00406">
    <property type="entry name" value="ACTINS_1"/>
    <property type="match status" value="1"/>
</dbReference>
<dbReference type="PROSITE" id="PS00432">
    <property type="entry name" value="ACTINS_2"/>
    <property type="match status" value="1"/>
</dbReference>
<dbReference type="PROSITE" id="PS01132">
    <property type="entry name" value="ACTINS_ACT_LIKE"/>
    <property type="match status" value="1"/>
</dbReference>
<protein>
    <recommendedName>
        <fullName>Actin, alpha skeletal muscle</fullName>
        <ecNumber evidence="5">3.6.4.-</ecNumber>
    </recommendedName>
    <alternativeName>
        <fullName>Alpha-actin-1</fullName>
    </alternativeName>
    <component>
        <recommendedName>
            <fullName>Actin, alpha skeletal muscle, intermediate form</fullName>
        </recommendedName>
    </component>
</protein>
<sequence>MCDDEEVTALVCDNGSGLVKAGFAGDDAPRAVFPSIVGRPRHQGVMVGMGQKDSYVGDEAQSKRGILTLKYPIEHGIITNWDDMEKIWHHTFYNELRVAPEEHPTLLTEAPLNPKANREKMTQIMFETFNVPAMYVAIQAVLSLYASGRTTGIVLDAGDGVTHNVPVYEGYALPHAIMRLDLAGRDLTDYLMKILTERGYSFVTTAEREIVRDIKEKLCYVALDFENEMATAASSSSLEKSYELPDGQVITIGNERFRCPETLFQPSFIGMESAGIHETAYNSIMKCDIDIRKDLYANNVLSGGTTMYPGIADRMQKEITALAPSTMKIKIIAPPERKYSVWIGGSILASLSTFQQMWITKQEYDEAGPSIVHRKCF</sequence>
<accession>P49055</accession>
<gene>
    <name type="primary">acta1</name>
</gene>
<feature type="initiator methionine" description="Removed">
    <location>
        <position position="1"/>
    </location>
</feature>
<feature type="chain" id="PRO_0000442819" description="Actin, alpha skeletal muscle, intermediate form" evidence="1">
    <location>
        <begin position="2"/>
        <end position="377"/>
    </location>
</feature>
<feature type="chain" id="PRO_0000442820" description="Actin, alpha skeletal muscle" evidence="1">
    <location>
        <begin position="3"/>
        <end position="377"/>
    </location>
</feature>
<feature type="modified residue" description="N-acetylcysteine; in intermediate form" evidence="1">
    <location>
        <position position="2"/>
    </location>
</feature>
<feature type="modified residue" description="N-acetylaspartate; in Actin, alpha skeletal muscle" evidence="4">
    <location>
        <position position="3"/>
    </location>
</feature>
<feature type="modified residue" description="Methionine (R)-sulfoxide" evidence="3">
    <location>
        <position position="46"/>
    </location>
</feature>
<feature type="modified residue" description="Methionine (R)-sulfoxide" evidence="3">
    <location>
        <position position="49"/>
    </location>
</feature>
<feature type="modified residue" description="Tele-methylhistidine" evidence="4">
    <location>
        <position position="75"/>
    </location>
</feature>
<feature type="modified residue" description="N6-methyllysine" evidence="2">
    <location>
        <position position="86"/>
    </location>
</feature>
<reference key="1">
    <citation type="journal article" date="1995" name="Fish. Sci.">
        <title>Sequences of cDNA clones encoding alpha-actin of carp and goldfish skeletal muscles.</title>
        <authorList>
            <person name="Watabe S."/>
            <person name="Hirayama Y."/>
            <person name="Imai J."/>
            <person name="Kikuchi K."/>
            <person name="Yamashita M."/>
        </authorList>
    </citation>
    <scope>NUCLEOTIDE SEQUENCE [MRNA]</scope>
    <source>
        <tissue>Fast-twitch skeletal muscle</tissue>
    </source>
</reference>
<evidence type="ECO:0000250" key="1">
    <source>
        <dbReference type="UniProtKB" id="P62737"/>
    </source>
</evidence>
<evidence type="ECO:0000250" key="2">
    <source>
        <dbReference type="UniProtKB" id="P68133"/>
    </source>
</evidence>
<evidence type="ECO:0000250" key="3">
    <source>
        <dbReference type="UniProtKB" id="P68134"/>
    </source>
</evidence>
<evidence type="ECO:0000250" key="4">
    <source>
        <dbReference type="UniProtKB" id="P68135"/>
    </source>
</evidence>
<evidence type="ECO:0000250" key="5">
    <source>
        <dbReference type="UniProtKB" id="P68137"/>
    </source>
</evidence>
<evidence type="ECO:0000305" key="6"/>